<accession>Q5NHE6</accession>
<organism>
    <name type="scientific">Francisella tularensis subsp. tularensis (strain SCHU S4 / Schu 4)</name>
    <dbReference type="NCBI Taxonomy" id="177416"/>
    <lineage>
        <taxon>Bacteria</taxon>
        <taxon>Pseudomonadati</taxon>
        <taxon>Pseudomonadota</taxon>
        <taxon>Gammaproteobacteria</taxon>
        <taxon>Thiotrichales</taxon>
        <taxon>Francisellaceae</taxon>
        <taxon>Francisella</taxon>
    </lineage>
</organism>
<evidence type="ECO:0000255" key="1">
    <source>
        <dbReference type="HAMAP-Rule" id="MF_01824"/>
    </source>
</evidence>
<keyword id="KW-0456">Lyase</keyword>
<keyword id="KW-0663">Pyridoxal phosphate</keyword>
<keyword id="KW-1185">Reference proteome</keyword>
<keyword id="KW-0704">Schiff base</keyword>
<comment type="function">
    <text evidence="1">Catalyzes the formation of pyridoxal 5'-phosphate from ribose 5-phosphate (RBP), glyceraldehyde 3-phosphate (G3P) and ammonia. The ammonia is provided by the PdxT subunit. Can also use ribulose 5-phosphate and dihydroxyacetone phosphate as substrates, resulting from enzyme-catalyzed isomerization of RBP and G3P, respectively.</text>
</comment>
<comment type="catalytic activity">
    <reaction evidence="1">
        <text>aldehydo-D-ribose 5-phosphate + D-glyceraldehyde 3-phosphate + L-glutamine = pyridoxal 5'-phosphate + L-glutamate + phosphate + 3 H2O + H(+)</text>
        <dbReference type="Rhea" id="RHEA:31507"/>
        <dbReference type="ChEBI" id="CHEBI:15377"/>
        <dbReference type="ChEBI" id="CHEBI:15378"/>
        <dbReference type="ChEBI" id="CHEBI:29985"/>
        <dbReference type="ChEBI" id="CHEBI:43474"/>
        <dbReference type="ChEBI" id="CHEBI:58273"/>
        <dbReference type="ChEBI" id="CHEBI:58359"/>
        <dbReference type="ChEBI" id="CHEBI:59776"/>
        <dbReference type="ChEBI" id="CHEBI:597326"/>
        <dbReference type="EC" id="4.3.3.6"/>
    </reaction>
</comment>
<comment type="pathway">
    <text evidence="1">Cofactor biosynthesis; pyridoxal 5'-phosphate biosynthesis.</text>
</comment>
<comment type="subunit">
    <text evidence="1">In the presence of PdxT, forms a dodecamer of heterodimers.</text>
</comment>
<comment type="similarity">
    <text evidence="1">Belongs to the PdxS/SNZ family.</text>
</comment>
<name>PDXS_FRATT</name>
<gene>
    <name evidence="1" type="primary">pdxS</name>
    <name type="ordered locus">FTT_0511</name>
</gene>
<protein>
    <recommendedName>
        <fullName evidence="1">Pyridoxal 5'-phosphate synthase subunit PdxS</fullName>
        <shortName evidence="1">PLP synthase subunit PdxS</shortName>
        <ecNumber evidence="1">4.3.3.6</ecNumber>
    </recommendedName>
    <alternativeName>
        <fullName evidence="1">Pdx1</fullName>
    </alternativeName>
</protein>
<feature type="chain" id="PRO_0000109392" description="Pyridoxal 5'-phosphate synthase subunit PdxS">
    <location>
        <begin position="1"/>
        <end position="287"/>
    </location>
</feature>
<feature type="active site" description="Schiff-base intermediate with D-ribose 5-phosphate" evidence="1">
    <location>
        <position position="78"/>
    </location>
</feature>
<feature type="binding site" evidence="1">
    <location>
        <position position="21"/>
    </location>
    <ligand>
        <name>D-ribose 5-phosphate</name>
        <dbReference type="ChEBI" id="CHEBI:78346"/>
    </ligand>
</feature>
<feature type="binding site" evidence="1">
    <location>
        <position position="150"/>
    </location>
    <ligand>
        <name>D-ribose 5-phosphate</name>
        <dbReference type="ChEBI" id="CHEBI:78346"/>
    </ligand>
</feature>
<feature type="binding site" evidence="1">
    <location>
        <position position="162"/>
    </location>
    <ligand>
        <name>D-glyceraldehyde 3-phosphate</name>
        <dbReference type="ChEBI" id="CHEBI:59776"/>
    </ligand>
</feature>
<feature type="binding site" evidence="1">
    <location>
        <position position="211"/>
    </location>
    <ligand>
        <name>D-ribose 5-phosphate</name>
        <dbReference type="ChEBI" id="CHEBI:78346"/>
    </ligand>
</feature>
<feature type="binding site" evidence="1">
    <location>
        <begin position="232"/>
        <end position="233"/>
    </location>
    <ligand>
        <name>D-ribose 5-phosphate</name>
        <dbReference type="ChEBI" id="CHEBI:78346"/>
    </ligand>
</feature>
<dbReference type="EC" id="4.3.3.6" evidence="1"/>
<dbReference type="EMBL" id="AJ749949">
    <property type="protein sequence ID" value="CAG45144.1"/>
    <property type="molecule type" value="Genomic_DNA"/>
</dbReference>
<dbReference type="RefSeq" id="WP_003016899.1">
    <property type="nucleotide sequence ID" value="NZ_CP010290.1"/>
</dbReference>
<dbReference type="RefSeq" id="YP_169546.1">
    <property type="nucleotide sequence ID" value="NC_006570.2"/>
</dbReference>
<dbReference type="SMR" id="Q5NHE6"/>
<dbReference type="STRING" id="177416.FTT_0511"/>
<dbReference type="DNASU" id="3191379"/>
<dbReference type="EnsemblBacteria" id="CAG45144">
    <property type="protein sequence ID" value="CAG45144"/>
    <property type="gene ID" value="FTT_0511"/>
</dbReference>
<dbReference type="KEGG" id="ftu:FTT_0511"/>
<dbReference type="eggNOG" id="COG0214">
    <property type="taxonomic scope" value="Bacteria"/>
</dbReference>
<dbReference type="OrthoDB" id="9772545at2"/>
<dbReference type="UniPathway" id="UPA00245"/>
<dbReference type="Proteomes" id="UP000001174">
    <property type="component" value="Chromosome"/>
</dbReference>
<dbReference type="GO" id="GO:0036381">
    <property type="term" value="F:pyridoxal 5'-phosphate synthase (glutamine hydrolysing) activity"/>
    <property type="evidence" value="ECO:0007669"/>
    <property type="project" value="UniProtKB-UniRule"/>
</dbReference>
<dbReference type="GO" id="GO:0006520">
    <property type="term" value="P:amino acid metabolic process"/>
    <property type="evidence" value="ECO:0007669"/>
    <property type="project" value="TreeGrafter"/>
</dbReference>
<dbReference type="GO" id="GO:0042823">
    <property type="term" value="P:pyridoxal phosphate biosynthetic process"/>
    <property type="evidence" value="ECO:0007669"/>
    <property type="project" value="UniProtKB-UniRule"/>
</dbReference>
<dbReference type="GO" id="GO:0008615">
    <property type="term" value="P:pyridoxine biosynthetic process"/>
    <property type="evidence" value="ECO:0007669"/>
    <property type="project" value="TreeGrafter"/>
</dbReference>
<dbReference type="CDD" id="cd04727">
    <property type="entry name" value="pdxS"/>
    <property type="match status" value="1"/>
</dbReference>
<dbReference type="FunFam" id="3.20.20.70:FF:000001">
    <property type="entry name" value="Pyridoxine biosynthesis protein PDX1"/>
    <property type="match status" value="1"/>
</dbReference>
<dbReference type="Gene3D" id="3.20.20.70">
    <property type="entry name" value="Aldolase class I"/>
    <property type="match status" value="1"/>
</dbReference>
<dbReference type="HAMAP" id="MF_01824">
    <property type="entry name" value="PdxS"/>
    <property type="match status" value="1"/>
</dbReference>
<dbReference type="InterPro" id="IPR013785">
    <property type="entry name" value="Aldolase_TIM"/>
</dbReference>
<dbReference type="InterPro" id="IPR001852">
    <property type="entry name" value="PdxS/SNZ"/>
</dbReference>
<dbReference type="InterPro" id="IPR033755">
    <property type="entry name" value="PdxS/SNZ_N"/>
</dbReference>
<dbReference type="InterPro" id="IPR011060">
    <property type="entry name" value="RibuloseP-bd_barrel"/>
</dbReference>
<dbReference type="NCBIfam" id="NF003215">
    <property type="entry name" value="PRK04180.1"/>
    <property type="match status" value="1"/>
</dbReference>
<dbReference type="NCBIfam" id="TIGR00343">
    <property type="entry name" value="pyridoxal 5'-phosphate synthase lyase subunit PdxS"/>
    <property type="match status" value="1"/>
</dbReference>
<dbReference type="PANTHER" id="PTHR31829">
    <property type="entry name" value="PYRIDOXAL 5'-PHOSPHATE SYNTHASE SUBUNIT SNZ1-RELATED"/>
    <property type="match status" value="1"/>
</dbReference>
<dbReference type="PANTHER" id="PTHR31829:SF0">
    <property type="entry name" value="PYRIDOXAL 5'-PHOSPHATE SYNTHASE SUBUNIT SNZ1-RELATED"/>
    <property type="match status" value="1"/>
</dbReference>
<dbReference type="Pfam" id="PF01680">
    <property type="entry name" value="SOR_SNZ"/>
    <property type="match status" value="1"/>
</dbReference>
<dbReference type="PIRSF" id="PIRSF029271">
    <property type="entry name" value="Pdx1"/>
    <property type="match status" value="1"/>
</dbReference>
<dbReference type="SUPFAM" id="SSF51366">
    <property type="entry name" value="Ribulose-phoshate binding barrel"/>
    <property type="match status" value="1"/>
</dbReference>
<dbReference type="PROSITE" id="PS01235">
    <property type="entry name" value="PDXS_SNZ_1"/>
    <property type="match status" value="1"/>
</dbReference>
<dbReference type="PROSITE" id="PS51129">
    <property type="entry name" value="PDXS_SNZ_2"/>
    <property type="match status" value="1"/>
</dbReference>
<reference key="1">
    <citation type="journal article" date="2005" name="Nat. Genet.">
        <title>The complete genome sequence of Francisella tularensis, the causative agent of tularemia.</title>
        <authorList>
            <person name="Larsson P."/>
            <person name="Oyston P.C.F."/>
            <person name="Chain P."/>
            <person name="Chu M.C."/>
            <person name="Duffield M."/>
            <person name="Fuxelius H.-H."/>
            <person name="Garcia E."/>
            <person name="Haelltorp G."/>
            <person name="Johansson D."/>
            <person name="Isherwood K.E."/>
            <person name="Karp P.D."/>
            <person name="Larsson E."/>
            <person name="Liu Y."/>
            <person name="Michell S."/>
            <person name="Prior J."/>
            <person name="Prior R."/>
            <person name="Malfatti S."/>
            <person name="Sjoestedt A."/>
            <person name="Svensson K."/>
            <person name="Thompson N."/>
            <person name="Vergez L."/>
            <person name="Wagg J.K."/>
            <person name="Wren B.W."/>
            <person name="Lindler L.E."/>
            <person name="Andersson S.G.E."/>
            <person name="Forsman M."/>
            <person name="Titball R.W."/>
        </authorList>
    </citation>
    <scope>NUCLEOTIDE SEQUENCE [LARGE SCALE GENOMIC DNA]</scope>
    <source>
        <strain>SCHU S4 / Schu 4</strain>
    </source>
</reference>
<sequence>MSDINIKIGLAEMLKGGVIMDVVNAEQAEIAQQAGAVAVMALERVPADIRKDGGIARMSDPKLIKEIMSVVSIPVMAKARIGHFVEAQILESLGVDFIDESEVLTPADELNHIDKDSFKVPFVCGCTNLGEALRRIGEGAALIRTKGEAGTGNIVEAVRQLRQVNKDINYIKNADKSELMAIAKNLQAPYDLVTYVHKNGKLPVPNFSAGGVATPADAALMMQLGAESVFVGSGIFKSADPLKRARAIVSAVTYYNDAKILAEVSEDLGEPMTGINCDFEKFSQRGW</sequence>
<proteinExistence type="inferred from homology"/>